<organismHost>
    <name type="scientific">Acidianus convivator</name>
    <dbReference type="NCBI Taxonomy" id="269667"/>
</organismHost>
<proteinExistence type="inferred from homology"/>
<accession>Q3V4W1</accession>
<reference key="1">
    <citation type="journal article" date="2005" name="Nature">
        <title>Virology: independent virus development outside a host.</title>
        <authorList>
            <person name="Haring M."/>
            <person name="Vestergaard G."/>
            <person name="Rachel R."/>
            <person name="Chen L."/>
            <person name="Garrett R.A."/>
            <person name="Prangishvili D."/>
        </authorList>
    </citation>
    <scope>NUCLEOTIDE SEQUENCE [GENOMIC DNA]</scope>
</reference>
<keyword id="KW-1185">Reference proteome</keyword>
<keyword id="KW-0732">Signal</keyword>
<organism>
    <name type="scientific">Acidianus two-tailed virus</name>
    <name type="common">ATV</name>
    <dbReference type="NCBI Taxonomy" id="315953"/>
    <lineage>
        <taxon>Viruses</taxon>
        <taxon>Viruses incertae sedis</taxon>
        <taxon>Bicaudaviridae</taxon>
        <taxon>Bicaudavirus</taxon>
    </lineage>
</organism>
<dbReference type="EMBL" id="AJ888457">
    <property type="protein sequence ID" value="CAI59853.1"/>
    <property type="molecule type" value="Genomic_DNA"/>
</dbReference>
<dbReference type="RefSeq" id="YP_319856.1">
    <property type="nucleotide sequence ID" value="NC_007409.1"/>
</dbReference>
<dbReference type="GeneID" id="4484228"/>
<dbReference type="KEGG" id="vg:4484228"/>
<dbReference type="Proteomes" id="UP000002150">
    <property type="component" value="Genome"/>
</dbReference>
<evidence type="ECO:0000255" key="1"/>
<feature type="signal peptide" evidence="1">
    <location>
        <begin position="1"/>
        <end position="18"/>
    </location>
</feature>
<feature type="chain" id="PRO_0000389077" description="Uncharacterized protein ORF111">
    <location>
        <begin position="19"/>
        <end position="111"/>
    </location>
</feature>
<name>Y111_ATV</name>
<sequence>MGKSMEEGIFVKVFPSKAIFVIYKEVEIIVKPDYAGDTIKVKYVFNSDELQKKLVEYFNKFNVPYKEISKNEVEVYYDPMYQLDCFDHMFEKLTMGDTDYIDSILGRLLPI</sequence>
<protein>
    <recommendedName>
        <fullName>Uncharacterized protein ORF111</fullName>
    </recommendedName>
</protein>